<dbReference type="EMBL" id="AE015927">
    <property type="protein sequence ID" value="AAO35868.1"/>
    <property type="molecule type" value="Genomic_DNA"/>
</dbReference>
<dbReference type="RefSeq" id="WP_011099530.1">
    <property type="nucleotide sequence ID" value="NC_004557.1"/>
</dbReference>
<dbReference type="SMR" id="Q895H2"/>
<dbReference type="STRING" id="212717.CTC_01302"/>
<dbReference type="GeneID" id="24255012"/>
<dbReference type="KEGG" id="ctc:CTC_01302"/>
<dbReference type="HOGENOM" id="CLU_002472_4_0_9"/>
<dbReference type="OrthoDB" id="9802448at2"/>
<dbReference type="Proteomes" id="UP000001412">
    <property type="component" value="Chromosome"/>
</dbReference>
<dbReference type="GO" id="GO:0005829">
    <property type="term" value="C:cytosol"/>
    <property type="evidence" value="ECO:0007669"/>
    <property type="project" value="TreeGrafter"/>
</dbReference>
<dbReference type="GO" id="GO:0005524">
    <property type="term" value="F:ATP binding"/>
    <property type="evidence" value="ECO:0007669"/>
    <property type="project" value="UniProtKB-UniRule"/>
</dbReference>
<dbReference type="GO" id="GO:0140664">
    <property type="term" value="F:ATP-dependent DNA damage sensor activity"/>
    <property type="evidence" value="ECO:0007669"/>
    <property type="project" value="InterPro"/>
</dbReference>
<dbReference type="GO" id="GO:0003684">
    <property type="term" value="F:damaged DNA binding"/>
    <property type="evidence" value="ECO:0007669"/>
    <property type="project" value="UniProtKB-UniRule"/>
</dbReference>
<dbReference type="GO" id="GO:0030983">
    <property type="term" value="F:mismatched DNA binding"/>
    <property type="evidence" value="ECO:0007669"/>
    <property type="project" value="InterPro"/>
</dbReference>
<dbReference type="GO" id="GO:0006298">
    <property type="term" value="P:mismatch repair"/>
    <property type="evidence" value="ECO:0007669"/>
    <property type="project" value="UniProtKB-UniRule"/>
</dbReference>
<dbReference type="CDD" id="cd03284">
    <property type="entry name" value="ABC_MutS1"/>
    <property type="match status" value="1"/>
</dbReference>
<dbReference type="FunFam" id="1.10.1420.10:FF:000007">
    <property type="entry name" value="DNA mismatch repair protein MutS"/>
    <property type="match status" value="1"/>
</dbReference>
<dbReference type="FunFam" id="3.40.1170.10:FF:000001">
    <property type="entry name" value="DNA mismatch repair protein MutS"/>
    <property type="match status" value="1"/>
</dbReference>
<dbReference type="FunFam" id="3.40.50.300:FF:001579">
    <property type="entry name" value="DNA mismatch repair protein MutS"/>
    <property type="match status" value="1"/>
</dbReference>
<dbReference type="Gene3D" id="1.10.1420.10">
    <property type="match status" value="2"/>
</dbReference>
<dbReference type="Gene3D" id="3.40.1170.10">
    <property type="entry name" value="DNA repair protein MutS, domain I"/>
    <property type="match status" value="1"/>
</dbReference>
<dbReference type="Gene3D" id="3.30.420.110">
    <property type="entry name" value="MutS, connector domain"/>
    <property type="match status" value="1"/>
</dbReference>
<dbReference type="Gene3D" id="3.40.50.300">
    <property type="entry name" value="P-loop containing nucleotide triphosphate hydrolases"/>
    <property type="match status" value="1"/>
</dbReference>
<dbReference type="HAMAP" id="MF_00096">
    <property type="entry name" value="MutS"/>
    <property type="match status" value="1"/>
</dbReference>
<dbReference type="InterPro" id="IPR005748">
    <property type="entry name" value="DNA_mismatch_repair_MutS"/>
</dbReference>
<dbReference type="InterPro" id="IPR007695">
    <property type="entry name" value="DNA_mismatch_repair_MutS-lik_N"/>
</dbReference>
<dbReference type="InterPro" id="IPR017261">
    <property type="entry name" value="DNA_mismatch_repair_MutS/MSH"/>
</dbReference>
<dbReference type="InterPro" id="IPR000432">
    <property type="entry name" value="DNA_mismatch_repair_MutS_C"/>
</dbReference>
<dbReference type="InterPro" id="IPR007861">
    <property type="entry name" value="DNA_mismatch_repair_MutS_clamp"/>
</dbReference>
<dbReference type="InterPro" id="IPR007696">
    <property type="entry name" value="DNA_mismatch_repair_MutS_core"/>
</dbReference>
<dbReference type="InterPro" id="IPR016151">
    <property type="entry name" value="DNA_mismatch_repair_MutS_N"/>
</dbReference>
<dbReference type="InterPro" id="IPR036187">
    <property type="entry name" value="DNA_mismatch_repair_MutS_sf"/>
</dbReference>
<dbReference type="InterPro" id="IPR007860">
    <property type="entry name" value="DNA_mmatch_repair_MutS_con_dom"/>
</dbReference>
<dbReference type="InterPro" id="IPR045076">
    <property type="entry name" value="MutS"/>
</dbReference>
<dbReference type="InterPro" id="IPR036678">
    <property type="entry name" value="MutS_con_dom_sf"/>
</dbReference>
<dbReference type="InterPro" id="IPR027417">
    <property type="entry name" value="P-loop_NTPase"/>
</dbReference>
<dbReference type="NCBIfam" id="TIGR01070">
    <property type="entry name" value="mutS1"/>
    <property type="match status" value="1"/>
</dbReference>
<dbReference type="NCBIfam" id="NF003810">
    <property type="entry name" value="PRK05399.1"/>
    <property type="match status" value="1"/>
</dbReference>
<dbReference type="PANTHER" id="PTHR11361:SF34">
    <property type="entry name" value="DNA MISMATCH REPAIR PROTEIN MSH1, MITOCHONDRIAL"/>
    <property type="match status" value="1"/>
</dbReference>
<dbReference type="PANTHER" id="PTHR11361">
    <property type="entry name" value="DNA MISMATCH REPAIR PROTEIN MUTS FAMILY MEMBER"/>
    <property type="match status" value="1"/>
</dbReference>
<dbReference type="Pfam" id="PF01624">
    <property type="entry name" value="MutS_I"/>
    <property type="match status" value="1"/>
</dbReference>
<dbReference type="Pfam" id="PF05188">
    <property type="entry name" value="MutS_II"/>
    <property type="match status" value="1"/>
</dbReference>
<dbReference type="Pfam" id="PF05192">
    <property type="entry name" value="MutS_III"/>
    <property type="match status" value="1"/>
</dbReference>
<dbReference type="Pfam" id="PF05190">
    <property type="entry name" value="MutS_IV"/>
    <property type="match status" value="1"/>
</dbReference>
<dbReference type="Pfam" id="PF00488">
    <property type="entry name" value="MutS_V"/>
    <property type="match status" value="1"/>
</dbReference>
<dbReference type="PIRSF" id="PIRSF037677">
    <property type="entry name" value="DNA_mis_repair_Msh6"/>
    <property type="match status" value="1"/>
</dbReference>
<dbReference type="SMART" id="SM00534">
    <property type="entry name" value="MUTSac"/>
    <property type="match status" value="1"/>
</dbReference>
<dbReference type="SMART" id="SM00533">
    <property type="entry name" value="MUTSd"/>
    <property type="match status" value="1"/>
</dbReference>
<dbReference type="SUPFAM" id="SSF55271">
    <property type="entry name" value="DNA repair protein MutS, domain I"/>
    <property type="match status" value="1"/>
</dbReference>
<dbReference type="SUPFAM" id="SSF53150">
    <property type="entry name" value="DNA repair protein MutS, domain II"/>
    <property type="match status" value="1"/>
</dbReference>
<dbReference type="SUPFAM" id="SSF48334">
    <property type="entry name" value="DNA repair protein MutS, domain III"/>
    <property type="match status" value="1"/>
</dbReference>
<dbReference type="SUPFAM" id="SSF52540">
    <property type="entry name" value="P-loop containing nucleoside triphosphate hydrolases"/>
    <property type="match status" value="1"/>
</dbReference>
<dbReference type="PROSITE" id="PS00486">
    <property type="entry name" value="DNA_MISMATCH_REPAIR_2"/>
    <property type="match status" value="1"/>
</dbReference>
<accession>Q895H2</accession>
<keyword id="KW-0067">ATP-binding</keyword>
<keyword id="KW-0227">DNA damage</keyword>
<keyword id="KW-0234">DNA repair</keyword>
<keyword id="KW-0238">DNA-binding</keyword>
<keyword id="KW-0547">Nucleotide-binding</keyword>
<keyword id="KW-1185">Reference proteome</keyword>
<name>MUTS_CLOTE</name>
<proteinExistence type="inferred from homology"/>
<protein>
    <recommendedName>
        <fullName evidence="1">DNA mismatch repair protein MutS</fullName>
    </recommendedName>
</protein>
<reference key="1">
    <citation type="journal article" date="2003" name="Proc. Natl. Acad. Sci. U.S.A.">
        <title>The genome sequence of Clostridium tetani, the causative agent of tetanus disease.</title>
        <authorList>
            <person name="Brueggemann H."/>
            <person name="Baeumer S."/>
            <person name="Fricke W.F."/>
            <person name="Wiezer A."/>
            <person name="Liesegang H."/>
            <person name="Decker I."/>
            <person name="Herzberg C."/>
            <person name="Martinez-Arias R."/>
            <person name="Merkl R."/>
            <person name="Henne A."/>
            <person name="Gottschalk G."/>
        </authorList>
    </citation>
    <scope>NUCLEOTIDE SEQUENCE [LARGE SCALE GENOMIC DNA]</scope>
    <source>
        <strain>Massachusetts / E88</strain>
    </source>
</reference>
<gene>
    <name evidence="1" type="primary">mutS</name>
    <name type="ordered locus">CTC_01302</name>
</gene>
<comment type="function">
    <text evidence="1">This protein is involved in the repair of mismatches in DNA. It is possible that it carries out the mismatch recognition step. This protein has a weak ATPase activity.</text>
</comment>
<comment type="similarity">
    <text evidence="1">Belongs to the DNA mismatch repair MutS family.</text>
</comment>
<feature type="chain" id="PRO_0000115091" description="DNA mismatch repair protein MutS">
    <location>
        <begin position="1"/>
        <end position="881"/>
    </location>
</feature>
<feature type="binding site" evidence="1">
    <location>
        <begin position="612"/>
        <end position="619"/>
    </location>
    <ligand>
        <name>ATP</name>
        <dbReference type="ChEBI" id="CHEBI:30616"/>
    </ligand>
</feature>
<evidence type="ECO:0000255" key="1">
    <source>
        <dbReference type="HAMAP-Rule" id="MF_00096"/>
    </source>
</evidence>
<sequence length="881" mass="100220">MKLTPMMQQYLEVKEKCKDCILFFRLGDFYEMFFEDAETASKELELVLTGRDCGLSKRAPMCGIPYHSASNYINRLVSKGYKIAICEQLEDPSAAKGIVKRDIVKIVTPGTYSDSNFLNETKNNYIMSLYIEDKSVAMCFCDISTGDFFATSHSLDKSIILDEISKFDPSELLLNKDIDKNILKEIKNRFTISITNLEKDYFKDYNLLEGQFSDFSKEEYSLVLIKCGNGLLKYILETQKMSLGHIDCFKNYNIVDYLSMDINSRRNLEITETIRDKSRKGSLLWVLDKCSTAMGARLIRNWVEQPLINKEKIDKRLNAVEELVLNISLHEDLKDALKDIYDIQRIVGKISSKNVNAKELLSLKNSIEKLPYIKDILSKLEADLFKDMLSNLDELKDIYELLESSIMDNPPITIKDGNLIKNGFNKEIDELRMAKSHGKEWIANLESSEREFTGIKSLKVGYNKVFGYFIEVTKSNISSVPEGRYVRKQTLSNCERYITPELKEMEDKILGAEEKLISLEYEVFVSIRNSIEKDIDRMKISANIVAILDCLSSLSTVALENNYSKPKILEGNDIIIKDGRHPVVEKMIPTGSFVANDTTMDTEDNQMLLITGPNMAGKSTYMRQVALITIMAQIGSFVPAKEASISLCDKIFTRIGASDDLSAGKSTFMVEMWEVSNILKNATSKSLIILDEVGRGTSTFDGLSIAWAVIEYICNNKNLRSKTLFATHYHELIQLENKIKGVKNYSVSVKEMDKDIVFLRKIIEGGADQSYGIEVAKLAGLPEDVIIRAKEILNSIEQNKDNKIELDDIKENKNHIEKENKKEIATDKLLANDDFQISFTQIEEENLIKEISSIDILNLNPMEGFNKLYDLINKAKSIEKK</sequence>
<organism>
    <name type="scientific">Clostridium tetani (strain Massachusetts / E88)</name>
    <dbReference type="NCBI Taxonomy" id="212717"/>
    <lineage>
        <taxon>Bacteria</taxon>
        <taxon>Bacillati</taxon>
        <taxon>Bacillota</taxon>
        <taxon>Clostridia</taxon>
        <taxon>Eubacteriales</taxon>
        <taxon>Clostridiaceae</taxon>
        <taxon>Clostridium</taxon>
    </lineage>
</organism>